<organism>
    <name type="scientific">Xylella fastidiosa (strain M23)</name>
    <dbReference type="NCBI Taxonomy" id="405441"/>
    <lineage>
        <taxon>Bacteria</taxon>
        <taxon>Pseudomonadati</taxon>
        <taxon>Pseudomonadota</taxon>
        <taxon>Gammaproteobacteria</taxon>
        <taxon>Lysobacterales</taxon>
        <taxon>Lysobacteraceae</taxon>
        <taxon>Xylella</taxon>
    </lineage>
</organism>
<reference key="1">
    <citation type="journal article" date="2010" name="J. Bacteriol.">
        <title>Whole genome sequences of two Xylella fastidiosa strains (M12 and M23) causing almond leaf scorch disease in California.</title>
        <authorList>
            <person name="Chen J."/>
            <person name="Xie G."/>
            <person name="Han S."/>
            <person name="Chertkov O."/>
            <person name="Sims D."/>
            <person name="Civerolo E.L."/>
        </authorList>
    </citation>
    <scope>NUCLEOTIDE SEQUENCE [LARGE SCALE GENOMIC DNA]</scope>
    <source>
        <strain>M23</strain>
    </source>
</reference>
<proteinExistence type="inferred from homology"/>
<keyword id="KW-0963">Cytoplasm</keyword>
<keyword id="KW-0227">DNA damage</keyword>
<keyword id="KW-0228">DNA excision</keyword>
<keyword id="KW-0234">DNA repair</keyword>
<keyword id="KW-0267">Excision nuclease</keyword>
<keyword id="KW-0742">SOS response</keyword>
<feature type="chain" id="PRO_1000099537" description="UvrABC system protein C">
    <location>
        <begin position="1"/>
        <end position="621"/>
    </location>
</feature>
<feature type="domain" description="GIY-YIG" evidence="1">
    <location>
        <begin position="20"/>
        <end position="98"/>
    </location>
</feature>
<feature type="domain" description="UVR" evidence="1">
    <location>
        <begin position="207"/>
        <end position="242"/>
    </location>
</feature>
<comment type="function">
    <text evidence="1">The UvrABC repair system catalyzes the recognition and processing of DNA lesions. UvrC both incises the 5' and 3' sides of the lesion. The N-terminal half is responsible for the 3' incision and the C-terminal half is responsible for the 5' incision.</text>
</comment>
<comment type="subunit">
    <text evidence="1">Interacts with UvrB in an incision complex.</text>
</comment>
<comment type="subcellular location">
    <subcellularLocation>
        <location evidence="1">Cytoplasm</location>
    </subcellularLocation>
</comment>
<comment type="similarity">
    <text evidence="1">Belongs to the UvrC family.</text>
</comment>
<sequence>MTDNAPITFDGKRFAAHLSTAPGVYRMYAADDTLLYVGKAGALRKRVASYFNGTPKNTRLTAMLAQVVRMDVTITRNEAEALLLENQLIKSLTPRYNVLLRDDKSYPYVLLTREAWPRIALHRGPQIVPGRYFGPYPGVTAVRDMLNLIHKLFKLRSCEDSVFRNRSRPCLQYQIGRCSAPCVNVVTHDNYTEAVHRVTLFLEGKSDLLAEELIQAMQVASEHLEFEQAARLRDLLTSLRSMQNRQYVDGRAADLDVLACAALSGHACVLLLSFRDGRNLGTRMFFPKTNGEERTAEILSAFVSQYYAEYPPPPEILLDQEIPDHTLLEAAFSRSSAHKISLRWNVRGERAGYVELAVRNAQVALSTELTSQRAQRVRSEAVRQLLGLEGPIKRVECFDISHTMGEATVASCVVFDAVGPVRSQYRRYNITGITPGDDYAAMRQAIERRFRRAVEEDKQGERPDVLFIDGGAGQLAQAKMALNAVGVESVLLVGVSKGEERRAGHETLIMLDGQELHPGAASPALQFIQQVRDEAHRFAITGHRARRQKTRMTSKLEDIPGIGSRRRANLLKHFGGLAGVKAAGQTEIARVEGISTALAAKIYASLHGLSKNDAANASRVS</sequence>
<accession>B2I637</accession>
<dbReference type="EMBL" id="CP001011">
    <property type="protein sequence ID" value="ACB92825.1"/>
    <property type="molecule type" value="Genomic_DNA"/>
</dbReference>
<dbReference type="RefSeq" id="WP_004089558.1">
    <property type="nucleotide sequence ID" value="NC_010577.1"/>
</dbReference>
<dbReference type="SMR" id="B2I637"/>
<dbReference type="GeneID" id="93905143"/>
<dbReference type="KEGG" id="xfn:XfasM23_1410"/>
<dbReference type="HOGENOM" id="CLU_014841_3_0_6"/>
<dbReference type="Proteomes" id="UP000001698">
    <property type="component" value="Chromosome"/>
</dbReference>
<dbReference type="GO" id="GO:0005737">
    <property type="term" value="C:cytoplasm"/>
    <property type="evidence" value="ECO:0007669"/>
    <property type="project" value="UniProtKB-SubCell"/>
</dbReference>
<dbReference type="GO" id="GO:0009380">
    <property type="term" value="C:excinuclease repair complex"/>
    <property type="evidence" value="ECO:0007669"/>
    <property type="project" value="InterPro"/>
</dbReference>
<dbReference type="GO" id="GO:0003677">
    <property type="term" value="F:DNA binding"/>
    <property type="evidence" value="ECO:0007669"/>
    <property type="project" value="UniProtKB-UniRule"/>
</dbReference>
<dbReference type="GO" id="GO:0009381">
    <property type="term" value="F:excinuclease ABC activity"/>
    <property type="evidence" value="ECO:0007669"/>
    <property type="project" value="UniProtKB-UniRule"/>
</dbReference>
<dbReference type="GO" id="GO:0006289">
    <property type="term" value="P:nucleotide-excision repair"/>
    <property type="evidence" value="ECO:0007669"/>
    <property type="project" value="UniProtKB-UniRule"/>
</dbReference>
<dbReference type="GO" id="GO:0009432">
    <property type="term" value="P:SOS response"/>
    <property type="evidence" value="ECO:0007669"/>
    <property type="project" value="UniProtKB-UniRule"/>
</dbReference>
<dbReference type="CDD" id="cd10434">
    <property type="entry name" value="GIY-YIG_UvrC_Cho"/>
    <property type="match status" value="1"/>
</dbReference>
<dbReference type="FunFam" id="1.10.150.20:FF:000005">
    <property type="entry name" value="UvrABC system protein C"/>
    <property type="match status" value="1"/>
</dbReference>
<dbReference type="FunFam" id="3.30.420.340:FF:000001">
    <property type="entry name" value="UvrABC system protein C"/>
    <property type="match status" value="1"/>
</dbReference>
<dbReference type="FunFam" id="3.40.1440.10:FF:000001">
    <property type="entry name" value="UvrABC system protein C"/>
    <property type="match status" value="1"/>
</dbReference>
<dbReference type="Gene3D" id="1.10.150.20">
    <property type="entry name" value="5' to 3' exonuclease, C-terminal subdomain"/>
    <property type="match status" value="1"/>
</dbReference>
<dbReference type="Gene3D" id="3.40.1440.10">
    <property type="entry name" value="GIY-YIG endonuclease"/>
    <property type="match status" value="1"/>
</dbReference>
<dbReference type="Gene3D" id="4.10.860.10">
    <property type="entry name" value="UVR domain"/>
    <property type="match status" value="1"/>
</dbReference>
<dbReference type="Gene3D" id="3.30.420.340">
    <property type="entry name" value="UvrC, RNAse H endonuclease domain"/>
    <property type="match status" value="1"/>
</dbReference>
<dbReference type="HAMAP" id="MF_00203">
    <property type="entry name" value="UvrC"/>
    <property type="match status" value="1"/>
</dbReference>
<dbReference type="InterPro" id="IPR000305">
    <property type="entry name" value="GIY-YIG_endonuc"/>
</dbReference>
<dbReference type="InterPro" id="IPR035901">
    <property type="entry name" value="GIY-YIG_endonuc_sf"/>
</dbReference>
<dbReference type="InterPro" id="IPR047296">
    <property type="entry name" value="GIY-YIG_UvrC_Cho"/>
</dbReference>
<dbReference type="InterPro" id="IPR003583">
    <property type="entry name" value="Hlx-hairpin-Hlx_DNA-bd_motif"/>
</dbReference>
<dbReference type="InterPro" id="IPR010994">
    <property type="entry name" value="RuvA_2-like"/>
</dbReference>
<dbReference type="InterPro" id="IPR001943">
    <property type="entry name" value="UVR_dom"/>
</dbReference>
<dbReference type="InterPro" id="IPR036876">
    <property type="entry name" value="UVR_dom_sf"/>
</dbReference>
<dbReference type="InterPro" id="IPR050066">
    <property type="entry name" value="UvrABC_protein_C"/>
</dbReference>
<dbReference type="InterPro" id="IPR004791">
    <property type="entry name" value="UvrC"/>
</dbReference>
<dbReference type="InterPro" id="IPR001162">
    <property type="entry name" value="UvrC_RNase_H_dom"/>
</dbReference>
<dbReference type="InterPro" id="IPR038476">
    <property type="entry name" value="UvrC_RNase_H_dom_sf"/>
</dbReference>
<dbReference type="NCBIfam" id="TIGR00194">
    <property type="entry name" value="uvrC"/>
    <property type="match status" value="1"/>
</dbReference>
<dbReference type="PANTHER" id="PTHR30562:SF1">
    <property type="entry name" value="UVRABC SYSTEM PROTEIN C"/>
    <property type="match status" value="1"/>
</dbReference>
<dbReference type="PANTHER" id="PTHR30562">
    <property type="entry name" value="UVRC/OXIDOREDUCTASE"/>
    <property type="match status" value="1"/>
</dbReference>
<dbReference type="Pfam" id="PF01541">
    <property type="entry name" value="GIY-YIG"/>
    <property type="match status" value="1"/>
</dbReference>
<dbReference type="Pfam" id="PF14520">
    <property type="entry name" value="HHH_5"/>
    <property type="match status" value="1"/>
</dbReference>
<dbReference type="Pfam" id="PF02151">
    <property type="entry name" value="UVR"/>
    <property type="match status" value="1"/>
</dbReference>
<dbReference type="Pfam" id="PF22920">
    <property type="entry name" value="UvrC_RNaseH"/>
    <property type="match status" value="1"/>
</dbReference>
<dbReference type="Pfam" id="PF08459">
    <property type="entry name" value="UvrC_RNaseH_dom"/>
    <property type="match status" value="1"/>
</dbReference>
<dbReference type="SMART" id="SM00465">
    <property type="entry name" value="GIYc"/>
    <property type="match status" value="1"/>
</dbReference>
<dbReference type="SMART" id="SM00278">
    <property type="entry name" value="HhH1"/>
    <property type="match status" value="2"/>
</dbReference>
<dbReference type="SUPFAM" id="SSF46600">
    <property type="entry name" value="C-terminal UvrC-binding domain of UvrB"/>
    <property type="match status" value="1"/>
</dbReference>
<dbReference type="SUPFAM" id="SSF82771">
    <property type="entry name" value="GIY-YIG endonuclease"/>
    <property type="match status" value="1"/>
</dbReference>
<dbReference type="SUPFAM" id="SSF47781">
    <property type="entry name" value="RuvA domain 2-like"/>
    <property type="match status" value="1"/>
</dbReference>
<dbReference type="PROSITE" id="PS50164">
    <property type="entry name" value="GIY_YIG"/>
    <property type="match status" value="1"/>
</dbReference>
<dbReference type="PROSITE" id="PS50151">
    <property type="entry name" value="UVR"/>
    <property type="match status" value="1"/>
</dbReference>
<dbReference type="PROSITE" id="PS50165">
    <property type="entry name" value="UVRC"/>
    <property type="match status" value="1"/>
</dbReference>
<protein>
    <recommendedName>
        <fullName evidence="1">UvrABC system protein C</fullName>
        <shortName evidence="1">Protein UvrC</shortName>
    </recommendedName>
    <alternativeName>
        <fullName evidence="1">Excinuclease ABC subunit C</fullName>
    </alternativeName>
</protein>
<name>UVRC_XYLF2</name>
<gene>
    <name evidence="1" type="primary">uvrC</name>
    <name type="ordered locus">XfasM23_1410</name>
</gene>
<evidence type="ECO:0000255" key="1">
    <source>
        <dbReference type="HAMAP-Rule" id="MF_00203"/>
    </source>
</evidence>